<sequence length="295" mass="33942">MASFMRSLFSDHSRYVESFRRFLNNSTEHQCMQEFMDKKLPGIIARIGETKAEIKILSIGGGAGEIDLQILSKVQAQYPGICINNEVVEPNAEQIVKYKELVAKTSNMENIKFAWHKETSSEYQKRVVEEDEEPPKWDFIHMIQMLYYVKDIPATLKFFHGLLAANAKILIILVSGTSGWEKLWKKYGFRLPRDDLCQYVTSSDLAQILDDLGIKYECYDLLSTMDITDCFIDGNENGDLLWDFLTETCNFIKTAPLDLKEEIMKDLQEPEFSVKKEGKVLFNNNLSFIVVEANV</sequence>
<dbReference type="EC" id="2.1.1.8" evidence="2"/>
<dbReference type="EMBL" id="D10693">
    <property type="protein sequence ID" value="BAA01535.1"/>
    <property type="molecule type" value="mRNA"/>
</dbReference>
<dbReference type="EMBL" id="AB007834">
    <property type="protein sequence ID" value="BAB84319.1"/>
    <property type="molecule type" value="Genomic_DNA"/>
</dbReference>
<dbReference type="EMBL" id="BC087635">
    <property type="protein sequence ID" value="AAH87635.1"/>
    <property type="molecule type" value="mRNA"/>
</dbReference>
<dbReference type="PIR" id="A42851">
    <property type="entry name" value="A42851"/>
</dbReference>
<dbReference type="RefSeq" id="NP_112306.1">
    <property type="nucleotide sequence ID" value="NM_031044.3"/>
</dbReference>
<dbReference type="SMR" id="Q01984"/>
<dbReference type="FunCoup" id="Q01984">
    <property type="interactions" value="71"/>
</dbReference>
<dbReference type="STRING" id="10116.ENSRNOP00000007471"/>
<dbReference type="BindingDB" id="Q01984"/>
<dbReference type="ChEMBL" id="CHEMBL3241"/>
<dbReference type="DrugCentral" id="Q01984"/>
<dbReference type="iPTMnet" id="Q01984"/>
<dbReference type="PhosphoSitePlus" id="Q01984"/>
<dbReference type="PaxDb" id="10116-ENSRNOP00000007471"/>
<dbReference type="Ensembl" id="ENSRNOT00000007471.7">
    <property type="protein sequence ID" value="ENSRNOP00000007471.3"/>
    <property type="gene ID" value="ENSRNOG00000005223.7"/>
</dbReference>
<dbReference type="GeneID" id="81676"/>
<dbReference type="KEGG" id="rno:81676"/>
<dbReference type="UCSC" id="RGD:71049">
    <property type="organism name" value="rat"/>
</dbReference>
<dbReference type="AGR" id="RGD:71049"/>
<dbReference type="CTD" id="3176"/>
<dbReference type="RGD" id="71049">
    <property type="gene designation" value="Hnmt"/>
</dbReference>
<dbReference type="eggNOG" id="ENOG502QQJ1">
    <property type="taxonomic scope" value="Eukaryota"/>
</dbReference>
<dbReference type="GeneTree" id="ENSGT00390000002862"/>
<dbReference type="HOGENOM" id="CLU_058117_1_0_1"/>
<dbReference type="InParanoid" id="Q01984"/>
<dbReference type="OMA" id="KNIKFAW"/>
<dbReference type="OrthoDB" id="5984880at2759"/>
<dbReference type="PhylomeDB" id="Q01984"/>
<dbReference type="TreeFam" id="TF331080"/>
<dbReference type="BioCyc" id="MetaCyc:MONOMER-14646"/>
<dbReference type="SABIO-RK" id="Q01984"/>
<dbReference type="PRO" id="PR:Q01984"/>
<dbReference type="Proteomes" id="UP000002494">
    <property type="component" value="Chromosome 3"/>
</dbReference>
<dbReference type="Bgee" id="ENSRNOG00000005223">
    <property type="expression patterns" value="Expressed in kidney and 11 other cell types or tissues"/>
</dbReference>
<dbReference type="GO" id="GO:0005737">
    <property type="term" value="C:cytoplasm"/>
    <property type="evidence" value="ECO:0000250"/>
    <property type="project" value="UniProtKB"/>
</dbReference>
<dbReference type="GO" id="GO:0005829">
    <property type="term" value="C:cytosol"/>
    <property type="evidence" value="ECO:0000266"/>
    <property type="project" value="RGD"/>
</dbReference>
<dbReference type="GO" id="GO:0046539">
    <property type="term" value="F:histamine N-methyltransferase activity"/>
    <property type="evidence" value="ECO:0000314"/>
    <property type="project" value="RGD"/>
</dbReference>
<dbReference type="GO" id="GO:0008170">
    <property type="term" value="F:N-methyltransferase activity"/>
    <property type="evidence" value="ECO:0000266"/>
    <property type="project" value="RGD"/>
</dbReference>
<dbReference type="GO" id="GO:0098603">
    <property type="term" value="F:selenol Se-methyltransferase activity"/>
    <property type="evidence" value="ECO:0000304"/>
    <property type="project" value="Reactome"/>
</dbReference>
<dbReference type="GO" id="GO:0001695">
    <property type="term" value="P:histamine catabolic process"/>
    <property type="evidence" value="ECO:0000250"/>
    <property type="project" value="UniProtKB"/>
</dbReference>
<dbReference type="GO" id="GO:0001692">
    <property type="term" value="P:histamine metabolic process"/>
    <property type="evidence" value="ECO:0000314"/>
    <property type="project" value="RGD"/>
</dbReference>
<dbReference type="GO" id="GO:0006972">
    <property type="term" value="P:hyperosmotic response"/>
    <property type="evidence" value="ECO:0000270"/>
    <property type="project" value="RGD"/>
</dbReference>
<dbReference type="GO" id="GO:0032259">
    <property type="term" value="P:methylation"/>
    <property type="evidence" value="ECO:0000266"/>
    <property type="project" value="RGD"/>
</dbReference>
<dbReference type="GO" id="GO:0014075">
    <property type="term" value="P:response to amine"/>
    <property type="evidence" value="ECO:0000270"/>
    <property type="project" value="RGD"/>
</dbReference>
<dbReference type="GO" id="GO:0042220">
    <property type="term" value="P:response to cocaine"/>
    <property type="evidence" value="ECO:0000270"/>
    <property type="project" value="RGD"/>
</dbReference>
<dbReference type="GO" id="GO:0051384">
    <property type="term" value="P:response to glucocorticoid"/>
    <property type="evidence" value="ECO:0000270"/>
    <property type="project" value="RGD"/>
</dbReference>
<dbReference type="GO" id="GO:0035902">
    <property type="term" value="P:response to immobilization stress"/>
    <property type="evidence" value="ECO:0000270"/>
    <property type="project" value="RGD"/>
</dbReference>
<dbReference type="GO" id="GO:0070555">
    <property type="term" value="P:response to interleukin-1"/>
    <property type="evidence" value="ECO:0000270"/>
    <property type="project" value="RGD"/>
</dbReference>
<dbReference type="GO" id="GO:0002347">
    <property type="term" value="P:response to tumor cell"/>
    <property type="evidence" value="ECO:0000270"/>
    <property type="project" value="RGD"/>
</dbReference>
<dbReference type="GO" id="GO:0046500">
    <property type="term" value="P:S-adenosylmethionine metabolic process"/>
    <property type="evidence" value="ECO:0000314"/>
    <property type="project" value="RGD"/>
</dbReference>
<dbReference type="CDD" id="cd02440">
    <property type="entry name" value="AdoMet_MTases"/>
    <property type="match status" value="1"/>
</dbReference>
<dbReference type="FunFam" id="3.40.50.150:FF:000118">
    <property type="entry name" value="Histamine N-methyltransferase"/>
    <property type="match status" value="1"/>
</dbReference>
<dbReference type="Gene3D" id="3.40.50.150">
    <property type="entry name" value="Vaccinia Virus protein VP39"/>
    <property type="match status" value="1"/>
</dbReference>
<dbReference type="InterPro" id="IPR016673">
    <property type="entry name" value="HHMT-like"/>
</dbReference>
<dbReference type="InterPro" id="IPR029063">
    <property type="entry name" value="SAM-dependent_MTases_sf"/>
</dbReference>
<dbReference type="Pfam" id="PF13489">
    <property type="entry name" value="Methyltransf_23"/>
    <property type="match status" value="1"/>
</dbReference>
<dbReference type="PIRSF" id="PIRSF016616">
    <property type="entry name" value="HHMT"/>
    <property type="match status" value="1"/>
</dbReference>
<dbReference type="SUPFAM" id="SSF53335">
    <property type="entry name" value="S-adenosyl-L-methionine-dependent methyltransferases"/>
    <property type="match status" value="1"/>
</dbReference>
<dbReference type="PROSITE" id="PS51597">
    <property type="entry name" value="SAM_HNMT"/>
    <property type="match status" value="1"/>
</dbReference>
<accession>Q01984</accession>
<accession>Q59JM9</accession>
<name>HNMT_RAT</name>
<gene>
    <name type="primary">Hnmt</name>
</gene>
<protein>
    <recommendedName>
        <fullName>Histamine N-methyltransferase</fullName>
        <shortName>HMT</shortName>
        <ecNumber evidence="2">2.1.1.8</ecNumber>
    </recommendedName>
</protein>
<proteinExistence type="evidence at protein level"/>
<reference key="1">
    <citation type="journal article" date="1992" name="J. Biol. Chem.">
        <title>Histamine N-methyltransferase from rat kidney. Cloning, nucleotide sequence, and expression in Escherichia coli cells.</title>
        <authorList>
            <person name="Takemura M."/>
            <person name="Tanaka T."/>
            <person name="Taguchi Y."/>
            <person name="Imamura I."/>
            <person name="Mizuguchi H."/>
            <person name="Kuroda M."/>
            <person name="Fukui H."/>
            <person name="Yamatodani A."/>
            <person name="Wada H."/>
        </authorList>
    </citation>
    <scope>NUCLEOTIDE SEQUENCE [MRNA]</scope>
    <scope>PARTIAL PROTEIN SEQUENCE</scope>
    <scope>FUNCTION</scope>
    <scope>CATALYTIC ACTIVITY</scope>
    <scope>BIOPHYSICOCHEMICAL PROPERTIES</scope>
    <source>
        <tissue>Kidney</tissue>
    </source>
</reference>
<reference key="2">
    <citation type="journal article" date="2002" name="Jpn. J. Pharmacol.">
        <title>Genomic structure of the rat and mouse histamine N-methyltransferase gene.</title>
        <authorList>
            <person name="Kitanaka N."/>
            <person name="Kitanaka J."/>
            <person name="Oue T."/>
            <person name="Tada Y."/>
            <person name="Tanaka T."/>
            <person name="Takemura M."/>
        </authorList>
    </citation>
    <scope>NUCLEOTIDE SEQUENCE [GENOMIC DNA]</scope>
    <source>
        <strain>Sprague-Dawley</strain>
        <tissue>Liver</tissue>
    </source>
</reference>
<reference key="3">
    <citation type="journal article" date="2004" name="Genome Res.">
        <title>The status, quality, and expansion of the NIH full-length cDNA project: the Mammalian Gene Collection (MGC).</title>
        <authorList>
            <consortium name="The MGC Project Team"/>
        </authorList>
    </citation>
    <scope>NUCLEOTIDE SEQUENCE [LARGE SCALE MRNA]</scope>
    <source>
        <tissue>Brain</tissue>
    </source>
</reference>
<feature type="chain" id="PRO_0000084024" description="Histamine N-methyltransferase">
    <location>
        <begin position="1"/>
        <end position="295"/>
    </location>
</feature>
<feature type="binding site" evidence="1">
    <location>
        <position position="28"/>
    </location>
    <ligand>
        <name>substrate</name>
    </ligand>
</feature>
<feature type="binding site" evidence="1">
    <location>
        <position position="60"/>
    </location>
    <ligand>
        <name>S-adenosyl-L-methionine</name>
        <dbReference type="ChEBI" id="CHEBI:59789"/>
    </ligand>
</feature>
<feature type="binding site" evidence="1">
    <location>
        <position position="89"/>
    </location>
    <ligand>
        <name>S-adenosyl-L-methionine</name>
        <dbReference type="ChEBI" id="CHEBI:59789"/>
    </ligand>
</feature>
<feature type="binding site" evidence="1">
    <location>
        <position position="94"/>
    </location>
    <ligand>
        <name>S-adenosyl-L-methionine</name>
        <dbReference type="ChEBI" id="CHEBI:59789"/>
    </ligand>
</feature>
<feature type="binding site" evidence="1">
    <location>
        <position position="120"/>
    </location>
    <ligand>
        <name>S-adenosyl-L-methionine</name>
        <dbReference type="ChEBI" id="CHEBI:59789"/>
    </ligand>
</feature>
<feature type="binding site" evidence="1">
    <location>
        <position position="143"/>
    </location>
    <ligand>
        <name>S-adenosyl-L-methionine</name>
        <dbReference type="ChEBI" id="CHEBI:59789"/>
    </ligand>
</feature>
<feature type="binding site" evidence="1">
    <location>
        <position position="284"/>
    </location>
    <ligand>
        <name>substrate</name>
    </ligand>
</feature>
<feature type="modified residue" description="Blocked amino end (Ala)">
    <location>
        <position position="2"/>
    </location>
</feature>
<keyword id="KW-0963">Cytoplasm</keyword>
<keyword id="KW-0903">Direct protein sequencing</keyword>
<keyword id="KW-0489">Methyltransferase</keyword>
<keyword id="KW-1185">Reference proteome</keyword>
<keyword id="KW-0949">S-adenosyl-L-methionine</keyword>
<keyword id="KW-0808">Transferase</keyword>
<comment type="function">
    <text evidence="2">Inactivates histamine by N-methylation. Plays an important role in degrading histamine and in regulating the airway response to histamine.</text>
</comment>
<comment type="catalytic activity">
    <reaction evidence="1 2">
        <text>histamine + S-adenosyl-L-methionine = N(tau)-methylhistamine + S-adenosyl-L-homocysteine + H(+)</text>
        <dbReference type="Rhea" id="RHEA:19301"/>
        <dbReference type="ChEBI" id="CHEBI:15378"/>
        <dbReference type="ChEBI" id="CHEBI:57856"/>
        <dbReference type="ChEBI" id="CHEBI:58432"/>
        <dbReference type="ChEBI" id="CHEBI:58600"/>
        <dbReference type="ChEBI" id="CHEBI:59789"/>
        <dbReference type="EC" id="2.1.1.8"/>
    </reaction>
</comment>
<comment type="biophysicochemical properties">
    <kinetics>
        <KM evidence="2">7.1 uM for histamine (at pH 7.5)</KM>
        <KM evidence="2">6.3 uM for AdoMet (at pH 7.5)</KM>
        <Vmax evidence="2">1.6 umol/min/mg enzyme (at pH 8.5)</Vmax>
    </kinetics>
</comment>
<comment type="subunit">
    <text evidence="3">Monomer.</text>
</comment>
<comment type="subcellular location">
    <subcellularLocation>
        <location evidence="3">Cytoplasm</location>
    </subcellularLocation>
</comment>
<comment type="similarity">
    <text evidence="1">Belongs to the class I-like SAM-binding methyltransferase superfamily. HNMT family.</text>
</comment>
<organism>
    <name type="scientific">Rattus norvegicus</name>
    <name type="common">Rat</name>
    <dbReference type="NCBI Taxonomy" id="10116"/>
    <lineage>
        <taxon>Eukaryota</taxon>
        <taxon>Metazoa</taxon>
        <taxon>Chordata</taxon>
        <taxon>Craniata</taxon>
        <taxon>Vertebrata</taxon>
        <taxon>Euteleostomi</taxon>
        <taxon>Mammalia</taxon>
        <taxon>Eutheria</taxon>
        <taxon>Euarchontoglires</taxon>
        <taxon>Glires</taxon>
        <taxon>Rodentia</taxon>
        <taxon>Myomorpha</taxon>
        <taxon>Muroidea</taxon>
        <taxon>Muridae</taxon>
        <taxon>Murinae</taxon>
        <taxon>Rattus</taxon>
    </lineage>
</organism>
<evidence type="ECO:0000255" key="1">
    <source>
        <dbReference type="PROSITE-ProRule" id="PRU00929"/>
    </source>
</evidence>
<evidence type="ECO:0000269" key="2">
    <source>
    </source>
</evidence>
<evidence type="ECO:0000305" key="3">
    <source>
    </source>
</evidence>